<accession>P86120</accession>
<keyword id="KW-0106">Calcium</keyword>
<keyword id="KW-0903">Direct protein sequencing</keyword>
<keyword id="KW-0378">Hydrolase</keyword>
<keyword id="KW-0442">Lipid degradation</keyword>
<keyword id="KW-0443">Lipid metabolism</keyword>
<keyword id="KW-0479">Metal-binding</keyword>
<keyword id="KW-0964">Secreted</keyword>
<feature type="chain" id="PRO_0000358860" description="Phospholipase A2 2">
    <location>
        <begin position="1"/>
        <end position="27" status="greater than"/>
    </location>
</feature>
<feature type="region of interest" description="Disordered" evidence="6">
    <location>
        <begin position="1"/>
        <end position="27"/>
    </location>
</feature>
<feature type="compositionally biased region" description="Basic and acidic residues" evidence="6">
    <location>
        <begin position="18"/>
        <end position="27"/>
    </location>
</feature>
<feature type="binding site" evidence="2">
    <location>
        <position position="11"/>
    </location>
    <ligand>
        <name>Ca(2+)</name>
        <dbReference type="ChEBI" id="CHEBI:29108"/>
    </ligand>
</feature>
<feature type="binding site" evidence="2">
    <location>
        <position position="13"/>
    </location>
    <ligand>
        <name>Ca(2+)</name>
        <dbReference type="ChEBI" id="CHEBI:29108"/>
    </ligand>
</feature>
<feature type="binding site" evidence="2">
    <location>
        <position position="15"/>
    </location>
    <ligand>
        <name>Ca(2+)</name>
        <dbReference type="ChEBI" id="CHEBI:29108"/>
    </ligand>
</feature>
<feature type="non-terminal residue" evidence="8">
    <location>
        <position position="27"/>
    </location>
</feature>
<comment type="function">
    <text>PLA2 catalyzes the calcium-dependent hydrolysis of the 2-acyl groups in 3-sn-phosphoglycerides.</text>
</comment>
<comment type="catalytic activity">
    <reaction evidence="4 5 7">
        <text>a 1,2-diacyl-sn-glycero-3-phosphocholine + H2O = a 1-acyl-sn-glycero-3-phosphocholine + a fatty acid + H(+)</text>
        <dbReference type="Rhea" id="RHEA:15801"/>
        <dbReference type="ChEBI" id="CHEBI:15377"/>
        <dbReference type="ChEBI" id="CHEBI:15378"/>
        <dbReference type="ChEBI" id="CHEBI:28868"/>
        <dbReference type="ChEBI" id="CHEBI:57643"/>
        <dbReference type="ChEBI" id="CHEBI:58168"/>
        <dbReference type="EC" id="3.1.1.4"/>
    </reaction>
</comment>
<comment type="cofactor">
    <cofactor evidence="1">
        <name>Ca(2+)</name>
        <dbReference type="ChEBI" id="CHEBI:29108"/>
    </cofactor>
    <text evidence="1">Binds 1 Ca(2+) ion.</text>
</comment>
<comment type="subcellular location">
    <subcellularLocation>
        <location evidence="9">Secreted</location>
    </subcellularLocation>
</comment>
<comment type="tissue specificity">
    <text evidence="9">Expressed by the venom gland.</text>
</comment>
<comment type="similarity">
    <text evidence="3">Belongs to the phospholipase A2 family.</text>
</comment>
<name>PA22_OPICY</name>
<sequence>FMKVIDPGTKWCGPGNKAADDTDNGKN</sequence>
<dbReference type="EC" id="3.1.1.4"/>
<dbReference type="GO" id="GO:0005576">
    <property type="term" value="C:extracellular region"/>
    <property type="evidence" value="ECO:0007669"/>
    <property type="project" value="UniProtKB-SubCell"/>
</dbReference>
<dbReference type="GO" id="GO:0046872">
    <property type="term" value="F:metal ion binding"/>
    <property type="evidence" value="ECO:0007669"/>
    <property type="project" value="UniProtKB-KW"/>
</dbReference>
<dbReference type="GO" id="GO:0004623">
    <property type="term" value="F:phospholipase A2 activity"/>
    <property type="evidence" value="ECO:0007669"/>
    <property type="project" value="UniProtKB-EC"/>
</dbReference>
<dbReference type="GO" id="GO:0050482">
    <property type="term" value="P:arachidonate secretion"/>
    <property type="evidence" value="ECO:0007669"/>
    <property type="project" value="InterPro"/>
</dbReference>
<dbReference type="GO" id="GO:0016042">
    <property type="term" value="P:lipid catabolic process"/>
    <property type="evidence" value="ECO:0007669"/>
    <property type="project" value="UniProtKB-KW"/>
</dbReference>
<dbReference type="GO" id="GO:0006644">
    <property type="term" value="P:phospholipid metabolic process"/>
    <property type="evidence" value="ECO:0007669"/>
    <property type="project" value="InterPro"/>
</dbReference>
<dbReference type="Gene3D" id="1.20.90.10">
    <property type="entry name" value="Phospholipase A2 domain"/>
    <property type="match status" value="1"/>
</dbReference>
<dbReference type="InterPro" id="IPR016090">
    <property type="entry name" value="PLipase_A2_dom"/>
</dbReference>
<dbReference type="InterPro" id="IPR036444">
    <property type="entry name" value="PLipase_A2_dom_sf"/>
</dbReference>
<dbReference type="Pfam" id="PF05826">
    <property type="entry name" value="Phospholip_A2_2"/>
    <property type="match status" value="1"/>
</dbReference>
<reference evidence="9" key="1">
    <citation type="journal article" date="2008" name="Toxicon">
        <title>Mass spectrometry analysis, amino acid sequence and biological activity of venom components from the Brazilian scorpion Opisthacanthus cayaporum.</title>
        <authorList>
            <person name="Schwartz E.F."/>
            <person name="Camargos T.S."/>
            <person name="Zamudio F.Z."/>
            <person name="Silva L.P."/>
            <person name="Bloch C. Jr."/>
            <person name="Caixeta F."/>
            <person name="Schwartz C.A."/>
            <person name="Possani L.D."/>
        </authorList>
    </citation>
    <scope>PROTEIN SEQUENCE</scope>
    <scope>CATALYTIC ACTIVITY</scope>
    <source>
        <tissue evidence="7">Venom</tissue>
    </source>
</reference>
<evidence type="ECO:0000250" key="1"/>
<evidence type="ECO:0000250" key="2">
    <source>
        <dbReference type="UniProtKB" id="P00630"/>
    </source>
</evidence>
<evidence type="ECO:0000255" key="3"/>
<evidence type="ECO:0000255" key="4">
    <source>
        <dbReference type="PROSITE-ProRule" id="PRU10035"/>
    </source>
</evidence>
<evidence type="ECO:0000255" key="5">
    <source>
        <dbReference type="PROSITE-ProRule" id="PRU10036"/>
    </source>
</evidence>
<evidence type="ECO:0000256" key="6">
    <source>
        <dbReference type="SAM" id="MobiDB-lite"/>
    </source>
</evidence>
<evidence type="ECO:0000269" key="7">
    <source>
    </source>
</evidence>
<evidence type="ECO:0000303" key="8">
    <source>
    </source>
</evidence>
<evidence type="ECO:0000305" key="9"/>
<proteinExistence type="evidence at protein level"/>
<organism>
    <name type="scientific">Opisthacanthus cayaporum</name>
    <name type="common">South American scorpion</name>
    <dbReference type="NCBI Taxonomy" id="573324"/>
    <lineage>
        <taxon>Eukaryota</taxon>
        <taxon>Metazoa</taxon>
        <taxon>Ecdysozoa</taxon>
        <taxon>Arthropoda</taxon>
        <taxon>Chelicerata</taxon>
        <taxon>Arachnida</taxon>
        <taxon>Scorpiones</taxon>
        <taxon>Iurida</taxon>
        <taxon>Scorpionoidea</taxon>
        <taxon>Hemiscorpiidae</taxon>
        <taxon>Opisthacanthus</taxon>
    </lineage>
</organism>
<protein>
    <recommendedName>
        <fullName evidence="8">Phospholipase A2 2</fullName>
        <shortName evidence="8">OcyPLA2_2</shortName>
        <ecNumber>3.1.1.4</ecNumber>
    </recommendedName>
</protein>